<feature type="chain" id="PRO_0000369909" description="Serine hydroxymethyltransferase">
    <location>
        <begin position="1"/>
        <end position="417"/>
    </location>
</feature>
<feature type="binding site" evidence="1">
    <location>
        <position position="121"/>
    </location>
    <ligand>
        <name>(6S)-5,6,7,8-tetrahydrofolate</name>
        <dbReference type="ChEBI" id="CHEBI:57453"/>
    </ligand>
</feature>
<feature type="binding site" evidence="1">
    <location>
        <begin position="125"/>
        <end position="127"/>
    </location>
    <ligand>
        <name>(6S)-5,6,7,8-tetrahydrofolate</name>
        <dbReference type="ChEBI" id="CHEBI:57453"/>
    </ligand>
</feature>
<feature type="binding site" evidence="1">
    <location>
        <begin position="355"/>
        <end position="357"/>
    </location>
    <ligand>
        <name>(6S)-5,6,7,8-tetrahydrofolate</name>
        <dbReference type="ChEBI" id="CHEBI:57453"/>
    </ligand>
</feature>
<feature type="site" description="Plays an important role in substrate specificity" evidence="1">
    <location>
        <position position="228"/>
    </location>
</feature>
<feature type="modified residue" description="N6-(pyridoxal phosphate)lysine" evidence="1">
    <location>
        <position position="229"/>
    </location>
</feature>
<organism>
    <name type="scientific">Citrobacter koseri (strain ATCC BAA-895 / CDC 4225-83 / SGSC4696)</name>
    <dbReference type="NCBI Taxonomy" id="290338"/>
    <lineage>
        <taxon>Bacteria</taxon>
        <taxon>Pseudomonadati</taxon>
        <taxon>Pseudomonadota</taxon>
        <taxon>Gammaproteobacteria</taxon>
        <taxon>Enterobacterales</taxon>
        <taxon>Enterobacteriaceae</taxon>
        <taxon>Citrobacter</taxon>
    </lineage>
</organism>
<proteinExistence type="inferred from homology"/>
<keyword id="KW-0028">Amino-acid biosynthesis</keyword>
<keyword id="KW-0963">Cytoplasm</keyword>
<keyword id="KW-0554">One-carbon metabolism</keyword>
<keyword id="KW-0663">Pyridoxal phosphate</keyword>
<keyword id="KW-1185">Reference proteome</keyword>
<keyword id="KW-0808">Transferase</keyword>
<gene>
    <name evidence="1" type="primary">glyA</name>
    <name type="ordered locus">CKO_00237</name>
</gene>
<sequence>MLKREMNIADYDAELWQAMEQEKVRQEEHIELIASENYTSPRVMQAQGSQLTNKYAEGYPGKRYYGGCEYVDVVEQLAIDRAKELFGADYANVQPHSGSQANFAVYTALLQPGDTVLGMNLAQGGHLTHGSPVNFSGKLYNIVPYGIDESGKIDYEEMAKLAQTHKPKMIIGGFSAYSGVVDWAKMREIADSIGAYLFVDMAHVAGLIAADVYPNPVPHAHVVTTTTHKTLAGPRGGLILAKGGDEELYKKLNSAVFPSAQGGPLMHVIAGKAVALKEAMEPEFKVYQQQVAKNAKAMVEVFLNRGYKVVSGGTENHLFLLDLVDKNLTGKEADAALGRANITVNKNSVPNDPKSPFVTSGIRIGSPAITRRGFKEAEAKELAGWMCDVLDNINDEAVIERIKGKVLDICARFPVYA</sequence>
<name>GLYA_CITK8</name>
<protein>
    <recommendedName>
        <fullName evidence="1">Serine hydroxymethyltransferase</fullName>
        <shortName evidence="1">SHMT</shortName>
        <shortName evidence="1">Serine methylase</shortName>
        <ecNumber evidence="1">2.1.2.1</ecNumber>
    </recommendedName>
</protein>
<reference key="1">
    <citation type="submission" date="2007-08" db="EMBL/GenBank/DDBJ databases">
        <authorList>
            <consortium name="The Citrobacter koseri Genome Sequencing Project"/>
            <person name="McClelland M."/>
            <person name="Sanderson E.K."/>
            <person name="Porwollik S."/>
            <person name="Spieth J."/>
            <person name="Clifton W.S."/>
            <person name="Latreille P."/>
            <person name="Courtney L."/>
            <person name="Wang C."/>
            <person name="Pepin K."/>
            <person name="Bhonagiri V."/>
            <person name="Nash W."/>
            <person name="Johnson M."/>
            <person name="Thiruvilangam P."/>
            <person name="Wilson R."/>
        </authorList>
    </citation>
    <scope>NUCLEOTIDE SEQUENCE [LARGE SCALE GENOMIC DNA]</scope>
    <source>
        <strain>ATCC BAA-895 / CDC 4225-83 / SGSC4696</strain>
    </source>
</reference>
<dbReference type="EC" id="2.1.2.1" evidence="1"/>
<dbReference type="EMBL" id="CP000822">
    <property type="protein sequence ID" value="ABV11401.1"/>
    <property type="status" value="ALT_INIT"/>
    <property type="molecule type" value="Genomic_DNA"/>
</dbReference>
<dbReference type="RefSeq" id="WP_024130115.1">
    <property type="nucleotide sequence ID" value="NC_009792.1"/>
</dbReference>
<dbReference type="SMR" id="A8AD38"/>
<dbReference type="STRING" id="290338.CKO_00237"/>
<dbReference type="GeneID" id="45134522"/>
<dbReference type="KEGG" id="cko:CKO_00237"/>
<dbReference type="HOGENOM" id="CLU_022477_2_1_6"/>
<dbReference type="OrthoDB" id="9803846at2"/>
<dbReference type="UniPathway" id="UPA00193"/>
<dbReference type="UniPathway" id="UPA00288">
    <property type="reaction ID" value="UER01023"/>
</dbReference>
<dbReference type="Proteomes" id="UP000008148">
    <property type="component" value="Chromosome"/>
</dbReference>
<dbReference type="GO" id="GO:0005829">
    <property type="term" value="C:cytosol"/>
    <property type="evidence" value="ECO:0007669"/>
    <property type="project" value="TreeGrafter"/>
</dbReference>
<dbReference type="GO" id="GO:0004372">
    <property type="term" value="F:glycine hydroxymethyltransferase activity"/>
    <property type="evidence" value="ECO:0007669"/>
    <property type="project" value="UniProtKB-UniRule"/>
</dbReference>
<dbReference type="GO" id="GO:0030170">
    <property type="term" value="F:pyridoxal phosphate binding"/>
    <property type="evidence" value="ECO:0007669"/>
    <property type="project" value="UniProtKB-UniRule"/>
</dbReference>
<dbReference type="GO" id="GO:0019264">
    <property type="term" value="P:glycine biosynthetic process from serine"/>
    <property type="evidence" value="ECO:0007669"/>
    <property type="project" value="UniProtKB-UniRule"/>
</dbReference>
<dbReference type="GO" id="GO:0035999">
    <property type="term" value="P:tetrahydrofolate interconversion"/>
    <property type="evidence" value="ECO:0007669"/>
    <property type="project" value="UniProtKB-UniRule"/>
</dbReference>
<dbReference type="CDD" id="cd00378">
    <property type="entry name" value="SHMT"/>
    <property type="match status" value="1"/>
</dbReference>
<dbReference type="FunFam" id="3.40.640.10:FF:000001">
    <property type="entry name" value="Serine hydroxymethyltransferase"/>
    <property type="match status" value="1"/>
</dbReference>
<dbReference type="FunFam" id="3.90.1150.10:FF:000003">
    <property type="entry name" value="Serine hydroxymethyltransferase"/>
    <property type="match status" value="1"/>
</dbReference>
<dbReference type="Gene3D" id="3.90.1150.10">
    <property type="entry name" value="Aspartate Aminotransferase, domain 1"/>
    <property type="match status" value="1"/>
</dbReference>
<dbReference type="Gene3D" id="3.40.640.10">
    <property type="entry name" value="Type I PLP-dependent aspartate aminotransferase-like (Major domain)"/>
    <property type="match status" value="1"/>
</dbReference>
<dbReference type="HAMAP" id="MF_00051">
    <property type="entry name" value="SHMT"/>
    <property type="match status" value="1"/>
</dbReference>
<dbReference type="InterPro" id="IPR015424">
    <property type="entry name" value="PyrdxlP-dep_Trfase"/>
</dbReference>
<dbReference type="InterPro" id="IPR015421">
    <property type="entry name" value="PyrdxlP-dep_Trfase_major"/>
</dbReference>
<dbReference type="InterPro" id="IPR015422">
    <property type="entry name" value="PyrdxlP-dep_Trfase_small"/>
</dbReference>
<dbReference type="InterPro" id="IPR001085">
    <property type="entry name" value="Ser_HO-MeTrfase"/>
</dbReference>
<dbReference type="InterPro" id="IPR049943">
    <property type="entry name" value="Ser_HO-MeTrfase-like"/>
</dbReference>
<dbReference type="InterPro" id="IPR019798">
    <property type="entry name" value="Ser_HO-MeTrfase_PLP_BS"/>
</dbReference>
<dbReference type="InterPro" id="IPR039429">
    <property type="entry name" value="SHMT-like_dom"/>
</dbReference>
<dbReference type="NCBIfam" id="NF000586">
    <property type="entry name" value="PRK00011.1"/>
    <property type="match status" value="1"/>
</dbReference>
<dbReference type="PANTHER" id="PTHR11680">
    <property type="entry name" value="SERINE HYDROXYMETHYLTRANSFERASE"/>
    <property type="match status" value="1"/>
</dbReference>
<dbReference type="PANTHER" id="PTHR11680:SF50">
    <property type="entry name" value="SERINE HYDROXYMETHYLTRANSFERASE"/>
    <property type="match status" value="1"/>
</dbReference>
<dbReference type="Pfam" id="PF00464">
    <property type="entry name" value="SHMT"/>
    <property type="match status" value="1"/>
</dbReference>
<dbReference type="PIRSF" id="PIRSF000412">
    <property type="entry name" value="SHMT"/>
    <property type="match status" value="1"/>
</dbReference>
<dbReference type="SUPFAM" id="SSF53383">
    <property type="entry name" value="PLP-dependent transferases"/>
    <property type="match status" value="1"/>
</dbReference>
<dbReference type="PROSITE" id="PS00096">
    <property type="entry name" value="SHMT"/>
    <property type="match status" value="1"/>
</dbReference>
<comment type="function">
    <text evidence="1">Catalyzes the reversible interconversion of serine and glycine with tetrahydrofolate (THF) serving as the one-carbon carrier. This reaction serves as the major source of one-carbon groups required for the biosynthesis of purines, thymidylate, methionine, and other important biomolecules. Also exhibits THF-independent aldolase activity toward beta-hydroxyamino acids, producing glycine and aldehydes, via a retro-aldol mechanism.</text>
</comment>
<comment type="catalytic activity">
    <reaction evidence="1">
        <text>(6R)-5,10-methylene-5,6,7,8-tetrahydrofolate + glycine + H2O = (6S)-5,6,7,8-tetrahydrofolate + L-serine</text>
        <dbReference type="Rhea" id="RHEA:15481"/>
        <dbReference type="ChEBI" id="CHEBI:15377"/>
        <dbReference type="ChEBI" id="CHEBI:15636"/>
        <dbReference type="ChEBI" id="CHEBI:33384"/>
        <dbReference type="ChEBI" id="CHEBI:57305"/>
        <dbReference type="ChEBI" id="CHEBI:57453"/>
        <dbReference type="EC" id="2.1.2.1"/>
    </reaction>
</comment>
<comment type="cofactor">
    <cofactor evidence="1">
        <name>pyridoxal 5'-phosphate</name>
        <dbReference type="ChEBI" id="CHEBI:597326"/>
    </cofactor>
</comment>
<comment type="pathway">
    <text evidence="1">One-carbon metabolism; tetrahydrofolate interconversion.</text>
</comment>
<comment type="pathway">
    <text evidence="1">Amino-acid biosynthesis; glycine biosynthesis; glycine from L-serine: step 1/1.</text>
</comment>
<comment type="subunit">
    <text evidence="1">Homodimer.</text>
</comment>
<comment type="subcellular location">
    <subcellularLocation>
        <location evidence="1">Cytoplasm</location>
    </subcellularLocation>
</comment>
<comment type="similarity">
    <text evidence="1">Belongs to the SHMT family.</text>
</comment>
<comment type="sequence caution" evidence="2">
    <conflict type="erroneous initiation">
        <sequence resource="EMBL-CDS" id="ABV11401"/>
    </conflict>
</comment>
<evidence type="ECO:0000255" key="1">
    <source>
        <dbReference type="HAMAP-Rule" id="MF_00051"/>
    </source>
</evidence>
<evidence type="ECO:0000305" key="2"/>
<accession>A8AD38</accession>